<evidence type="ECO:0000250" key="1"/>
<evidence type="ECO:0000305" key="2"/>
<comment type="function">
    <text evidence="1">Produces ATP from ADP in the presence of a proton gradient across the membrane.</text>
</comment>
<comment type="subunit">
    <text>F-type ATPases have 2 components, CF(1) - the catalytic core - and CF(0) - the membrane proton channel. CF(1) has five subunits: alpha(3), beta(3), gamma(1), delta(1), epsilon(1). CF(0) has three main subunits: a, b and c.</text>
</comment>
<comment type="subcellular location">
    <subcellularLocation>
        <location evidence="1">Cell inner membrane</location>
        <topology evidence="1">Peripheral membrane protein</topology>
    </subcellularLocation>
</comment>
<comment type="similarity">
    <text evidence="2">Belongs to the ATPase epsilon chain family.</text>
</comment>
<name>ATPE_CHLLI</name>
<protein>
    <recommendedName>
        <fullName>ATP synthase epsilon chain</fullName>
    </recommendedName>
    <alternativeName>
        <fullName>ATP synthase F1 sector epsilon subunit</fullName>
    </alternativeName>
    <alternativeName>
        <fullName>F-ATPase epsilon subunit</fullName>
    </alternativeName>
</protein>
<accession>P35111</accession>
<feature type="chain" id="PRO_0000188119" description="ATP synthase epsilon chain">
    <location>
        <begin position="1"/>
        <end position="88"/>
    </location>
</feature>
<keyword id="KW-0066">ATP synthesis</keyword>
<keyword id="KW-0997">Cell inner membrane</keyword>
<keyword id="KW-1003">Cell membrane</keyword>
<keyword id="KW-0139">CF(1)</keyword>
<keyword id="KW-0375">Hydrogen ion transport</keyword>
<keyword id="KW-0406">Ion transport</keyword>
<keyword id="KW-0472">Membrane</keyword>
<keyword id="KW-0813">Transport</keyword>
<reference key="1">
    <citation type="journal article" date="1993" name="Biochim. Biophys. Acta">
        <title>The atp2 operon of the green bacterium Chlorobium limicola.</title>
        <authorList>
            <person name="Xie D.L."/>
            <person name="Lill H."/>
            <person name="Hauska G."/>
            <person name="Maeda M."/>
            <person name="Futai M."/>
            <person name="Nelson N."/>
        </authorList>
    </citation>
    <scope>NUCLEOTIDE SEQUENCE [GENOMIC DNA]</scope>
</reference>
<proteinExistence type="inferred from homology"/>
<organism>
    <name type="scientific">Chlorobium limicola</name>
    <dbReference type="NCBI Taxonomy" id="1092"/>
    <lineage>
        <taxon>Bacteria</taxon>
        <taxon>Pseudomonadati</taxon>
        <taxon>Chlorobiota</taxon>
        <taxon>Chlorobiia</taxon>
        <taxon>Chlorobiales</taxon>
        <taxon>Chlorobiaceae</taxon>
        <taxon>Chlorobium/Pelodictyon group</taxon>
        <taxon>Chlorobium</taxon>
    </lineage>
</organism>
<sequence length="88" mass="9376">MASSDKAFKLDIVTPQKLFFSGEVTSVIAPGLDGLFQIMKGHAPLLAALKSGKVRLSLSDKSEDSFQIEGGFFEVSGNKAILLTEDVS</sequence>
<dbReference type="EMBL" id="S56812">
    <property type="protein sequence ID" value="AAB25775.2"/>
    <property type="molecule type" value="Genomic_DNA"/>
</dbReference>
<dbReference type="PIR" id="S30179">
    <property type="entry name" value="S30179"/>
</dbReference>
<dbReference type="SMR" id="P35111"/>
<dbReference type="GO" id="GO:0005886">
    <property type="term" value="C:plasma membrane"/>
    <property type="evidence" value="ECO:0007669"/>
    <property type="project" value="UniProtKB-SubCell"/>
</dbReference>
<dbReference type="GO" id="GO:0045259">
    <property type="term" value="C:proton-transporting ATP synthase complex"/>
    <property type="evidence" value="ECO:0007669"/>
    <property type="project" value="UniProtKB-KW"/>
</dbReference>
<dbReference type="GO" id="GO:0046933">
    <property type="term" value="F:proton-transporting ATP synthase activity, rotational mechanism"/>
    <property type="evidence" value="ECO:0007669"/>
    <property type="project" value="InterPro"/>
</dbReference>
<dbReference type="CDD" id="cd12152">
    <property type="entry name" value="F1-ATPase_delta"/>
    <property type="match status" value="1"/>
</dbReference>
<dbReference type="Gene3D" id="2.60.15.10">
    <property type="entry name" value="F0F1 ATP synthase delta/epsilon subunit, N-terminal"/>
    <property type="match status" value="1"/>
</dbReference>
<dbReference type="InterPro" id="IPR001469">
    <property type="entry name" value="ATP_synth_F1_dsu/esu"/>
</dbReference>
<dbReference type="InterPro" id="IPR020546">
    <property type="entry name" value="ATP_synth_F1_dsu/esu_N"/>
</dbReference>
<dbReference type="InterPro" id="IPR036771">
    <property type="entry name" value="ATPsynth_dsu/esu_N"/>
</dbReference>
<dbReference type="NCBIfam" id="TIGR01216">
    <property type="entry name" value="ATP_synt_epsi"/>
    <property type="match status" value="1"/>
</dbReference>
<dbReference type="PANTHER" id="PTHR13822">
    <property type="entry name" value="ATP SYNTHASE DELTA/EPSILON CHAIN"/>
    <property type="match status" value="1"/>
</dbReference>
<dbReference type="PANTHER" id="PTHR13822:SF10">
    <property type="entry name" value="ATP SYNTHASE EPSILON CHAIN, CHLOROPLASTIC"/>
    <property type="match status" value="1"/>
</dbReference>
<dbReference type="Pfam" id="PF02823">
    <property type="entry name" value="ATP-synt_DE_N"/>
    <property type="match status" value="1"/>
</dbReference>
<dbReference type="SUPFAM" id="SSF51344">
    <property type="entry name" value="Epsilon subunit of F1F0-ATP synthase N-terminal domain"/>
    <property type="match status" value="1"/>
</dbReference>
<gene>
    <name type="primary">atpC</name>
    <name type="synonym">atpE</name>
</gene>